<keyword id="KW-0067">ATP-binding</keyword>
<keyword id="KW-0408">Iron</keyword>
<keyword id="KW-0411">Iron-sulfur</keyword>
<keyword id="KW-0479">Metal-binding</keyword>
<keyword id="KW-0535">Nitrogen fixation</keyword>
<keyword id="KW-0547">Nucleotide-binding</keyword>
<keyword id="KW-0560">Oxidoreductase</keyword>
<keyword id="KW-1185">Reference proteome</keyword>
<feature type="chain" id="PRO_0000153104" description="Nitrogenase molybdenum-iron protein beta chain">
    <location>
        <begin position="1"/>
        <end position="459"/>
    </location>
</feature>
<feature type="binding site" evidence="1">
    <location>
        <position position="21"/>
    </location>
    <ligand>
        <name>[8Fe-7S] cluster</name>
        <dbReference type="ChEBI" id="CHEBI:21143"/>
        <note>ligand shared with alpha chain</note>
    </ligand>
</feature>
<feature type="binding site" evidence="1">
    <location>
        <position position="46"/>
    </location>
    <ligand>
        <name>[8Fe-7S] cluster</name>
        <dbReference type="ChEBI" id="CHEBI:21143"/>
        <note>ligand shared with alpha chain</note>
    </ligand>
</feature>
<feature type="binding site" evidence="1">
    <location>
        <position position="104"/>
    </location>
    <ligand>
        <name>[8Fe-7S] cluster</name>
        <dbReference type="ChEBI" id="CHEBI:21143"/>
        <note>ligand shared with alpha chain</note>
    </ligand>
</feature>
<feature type="binding site" evidence="1">
    <location>
        <position position="143"/>
    </location>
    <ligand>
        <name>[8Fe-7S] cluster</name>
        <dbReference type="ChEBI" id="CHEBI:21143"/>
        <note>ligand shared with alpha chain</note>
    </ligand>
</feature>
<reference key="1">
    <citation type="journal article" date="1997" name="J. Bacteriol.">
        <title>Complete genome sequence of Methanobacterium thermoautotrophicum deltaH: functional analysis and comparative genomics.</title>
        <authorList>
            <person name="Smith D.R."/>
            <person name="Doucette-Stamm L.A."/>
            <person name="Deloughery C."/>
            <person name="Lee H.-M."/>
            <person name="Dubois J."/>
            <person name="Aldredge T."/>
            <person name="Bashirzadeh R."/>
            <person name="Blakely D."/>
            <person name="Cook R."/>
            <person name="Gilbert K."/>
            <person name="Harrison D."/>
            <person name="Hoang L."/>
            <person name="Keagle P."/>
            <person name="Lumm W."/>
            <person name="Pothier B."/>
            <person name="Qiu D."/>
            <person name="Spadafora R."/>
            <person name="Vicare R."/>
            <person name="Wang Y."/>
            <person name="Wierzbowski J."/>
            <person name="Gibson R."/>
            <person name="Jiwani N."/>
            <person name="Caruso A."/>
            <person name="Bush D."/>
            <person name="Safer H."/>
            <person name="Patwell D."/>
            <person name="Prabhakar S."/>
            <person name="McDougall S."/>
            <person name="Shimer G."/>
            <person name="Goyal A."/>
            <person name="Pietrovski S."/>
            <person name="Church G.M."/>
            <person name="Daniels C.J."/>
            <person name="Mao J.-I."/>
            <person name="Rice P."/>
            <person name="Noelling J."/>
            <person name="Reeve J.N."/>
        </authorList>
    </citation>
    <scope>NUCLEOTIDE SEQUENCE [LARGE SCALE GENOMIC DNA]</scope>
    <source>
        <strain>ATCC 29096 / DSM 1053 / JCM 10044 / NBRC 100330 / Delta H</strain>
    </source>
</reference>
<accession>O27606</accession>
<dbReference type="EC" id="1.18.6.1"/>
<dbReference type="EMBL" id="AE000666">
    <property type="protein sequence ID" value="AAB86038.1"/>
    <property type="molecule type" value="Genomic_DNA"/>
</dbReference>
<dbReference type="PIR" id="G69075">
    <property type="entry name" value="G69075"/>
</dbReference>
<dbReference type="RefSeq" id="WP_010877173.1">
    <property type="nucleotide sequence ID" value="NC_000916.1"/>
</dbReference>
<dbReference type="SMR" id="O27606"/>
<dbReference type="STRING" id="187420.MTH_1564"/>
<dbReference type="PaxDb" id="187420-MTH_1564"/>
<dbReference type="EnsemblBacteria" id="AAB86038">
    <property type="protein sequence ID" value="AAB86038"/>
    <property type="gene ID" value="MTH_1564"/>
</dbReference>
<dbReference type="GeneID" id="1471833"/>
<dbReference type="KEGG" id="mth:MTH_1564"/>
<dbReference type="PATRIC" id="fig|187420.15.peg.1527"/>
<dbReference type="HOGENOM" id="CLU_025876_2_0_2"/>
<dbReference type="InParanoid" id="O27606"/>
<dbReference type="Proteomes" id="UP000005223">
    <property type="component" value="Chromosome"/>
</dbReference>
<dbReference type="GO" id="GO:0005524">
    <property type="term" value="F:ATP binding"/>
    <property type="evidence" value="ECO:0007669"/>
    <property type="project" value="UniProtKB-KW"/>
</dbReference>
<dbReference type="GO" id="GO:0051536">
    <property type="term" value="F:iron-sulfur cluster binding"/>
    <property type="evidence" value="ECO:0007669"/>
    <property type="project" value="UniProtKB-KW"/>
</dbReference>
<dbReference type="GO" id="GO:0046872">
    <property type="term" value="F:metal ion binding"/>
    <property type="evidence" value="ECO:0007669"/>
    <property type="project" value="UniProtKB-KW"/>
</dbReference>
<dbReference type="GO" id="GO:0016163">
    <property type="term" value="F:nitrogenase activity"/>
    <property type="evidence" value="ECO:0007669"/>
    <property type="project" value="UniProtKB-EC"/>
</dbReference>
<dbReference type="GO" id="GO:0009399">
    <property type="term" value="P:nitrogen fixation"/>
    <property type="evidence" value="ECO:0007669"/>
    <property type="project" value="UniProtKB-KW"/>
</dbReference>
<dbReference type="CDD" id="cd01965">
    <property type="entry name" value="Nitrogenase_MoFe_beta_like"/>
    <property type="match status" value="1"/>
</dbReference>
<dbReference type="Gene3D" id="3.40.50.1980">
    <property type="entry name" value="Nitrogenase molybdenum iron protein domain"/>
    <property type="match status" value="3"/>
</dbReference>
<dbReference type="Gene3D" id="1.20.89.10">
    <property type="entry name" value="Nitrogenase Molybdenum-iron Protein, subunit B, domain 4"/>
    <property type="match status" value="1"/>
</dbReference>
<dbReference type="InterPro" id="IPR050152">
    <property type="entry name" value="ChlB/BchB/BchZ"/>
</dbReference>
<dbReference type="InterPro" id="IPR000510">
    <property type="entry name" value="Nase/OxRdtase_comp1"/>
</dbReference>
<dbReference type="InterPro" id="IPR000318">
    <property type="entry name" value="Nase_comp1_CS"/>
</dbReference>
<dbReference type="PANTHER" id="PTHR33712">
    <property type="entry name" value="LIGHT-INDEPENDENT PROTOCHLOROPHYLLIDE REDUCTASE SUBUNIT B"/>
    <property type="match status" value="1"/>
</dbReference>
<dbReference type="PANTHER" id="PTHR33712:SF7">
    <property type="entry name" value="LIGHT-INDEPENDENT PROTOCHLOROPHYLLIDE REDUCTASE SUBUNIT B"/>
    <property type="match status" value="1"/>
</dbReference>
<dbReference type="Pfam" id="PF00148">
    <property type="entry name" value="Oxidored_nitro"/>
    <property type="match status" value="1"/>
</dbReference>
<dbReference type="SUPFAM" id="SSF53807">
    <property type="entry name" value="Helical backbone' metal receptor"/>
    <property type="match status" value="1"/>
</dbReference>
<dbReference type="PROSITE" id="PS00699">
    <property type="entry name" value="NITROGENASE_1_1"/>
    <property type="match status" value="1"/>
</dbReference>
<dbReference type="PROSITE" id="PS00090">
    <property type="entry name" value="NITROGENASE_1_2"/>
    <property type="match status" value="1"/>
</dbReference>
<name>NIFK_METTH</name>
<gene>
    <name type="primary">nifK</name>
    <name type="ordered locus">MTH_1564</name>
</gene>
<protein>
    <recommendedName>
        <fullName>Nitrogenase molybdenum-iron protein beta chain</fullName>
        <ecNumber>1.18.6.1</ecNumber>
    </recommendedName>
    <alternativeName>
        <fullName>Dinitrogenase</fullName>
    </alternativeName>
    <alternativeName>
        <fullName>Nitrogenase component I</fullName>
    </alternativeName>
</protein>
<organism>
    <name type="scientific">Methanothermobacter thermautotrophicus (strain ATCC 29096 / DSM 1053 / JCM 10044 / NBRC 100330 / Delta H)</name>
    <name type="common">Methanobacterium thermoautotrophicum</name>
    <dbReference type="NCBI Taxonomy" id="187420"/>
    <lineage>
        <taxon>Archaea</taxon>
        <taxon>Methanobacteriati</taxon>
        <taxon>Methanobacteriota</taxon>
        <taxon>Methanomada group</taxon>
        <taxon>Methanobacteria</taxon>
        <taxon>Methanobacteriales</taxon>
        <taxon>Methanobacteriaceae</taxon>
        <taxon>Methanothermobacter</taxon>
    </lineage>
</organism>
<comment type="function">
    <text>This molybdenum-iron protein is part of the nitrogenase complex that catalyzes the key enzymatic reactions in nitrogen fixation.</text>
</comment>
<comment type="catalytic activity">
    <reaction>
        <text>N2 + 8 reduced [2Fe-2S]-[ferredoxin] + 16 ATP + 16 H2O = H2 + 8 oxidized [2Fe-2S]-[ferredoxin] + 2 NH4(+) + 16 ADP + 16 phosphate + 6 H(+)</text>
        <dbReference type="Rhea" id="RHEA:21448"/>
        <dbReference type="Rhea" id="RHEA-COMP:10000"/>
        <dbReference type="Rhea" id="RHEA-COMP:10001"/>
        <dbReference type="ChEBI" id="CHEBI:15377"/>
        <dbReference type="ChEBI" id="CHEBI:15378"/>
        <dbReference type="ChEBI" id="CHEBI:17997"/>
        <dbReference type="ChEBI" id="CHEBI:18276"/>
        <dbReference type="ChEBI" id="CHEBI:28938"/>
        <dbReference type="ChEBI" id="CHEBI:30616"/>
        <dbReference type="ChEBI" id="CHEBI:33737"/>
        <dbReference type="ChEBI" id="CHEBI:33738"/>
        <dbReference type="ChEBI" id="CHEBI:43474"/>
        <dbReference type="ChEBI" id="CHEBI:456216"/>
        <dbReference type="EC" id="1.18.6.1"/>
    </reaction>
</comment>
<comment type="cofactor">
    <cofactor evidence="1">
        <name>[8Fe-7S] cluster</name>
        <dbReference type="ChEBI" id="CHEBI:21143"/>
    </cofactor>
    <text evidence="1">Binds 1 [8Fe-7S] cluster per heterodimer.</text>
</comment>
<comment type="subunit">
    <text>Tetramer of two alpha and two beta chains. Forms complex with the iron protein (nitrogenase component 2).</text>
</comment>
<comment type="similarity">
    <text evidence="2">Belongs to the NifD/NifK/NifE/NifN family.</text>
</comment>
<evidence type="ECO:0000250" key="1"/>
<evidence type="ECO:0000305" key="2"/>
<proteinExistence type="inferred from homology"/>
<sequence>MSEINVMERTRELVVNPLVTCQPFGAMFATLGIRRGLPIVHGSQGCSTFVRYGLNRHFREPAEIAVTSLHEDAAVFGGRSNLIDGVKNLVKRFRPELVGIVTTCSSEITGDDVDGFLRVAEAELREELGERFRTRMVSISTPSFVEHHLRGYGNALKSFIDTLAVDEGDCNERINLIPGIVNPGDIREIRHIFELMDVDPIILTDTSDPFDSPLRPSKTEKMPFYPKGGTVVSDIEESSNSIGTLSMSMYGNEASETLKKRFNIPKEHHIPIGVRNTDDFVRSLARIAEVDVSEELLDERGILIDSMADISSRYLFGRTAAVYGDPDMVMGVSRFLCELGITPLYACVGVDNEIFREGMKRVASEADERINVMINSDLRALERELTEEPVDFMIGNSDGRLIARDLGIPLVRMGFPVYDRVGYHRIPVVGYRGSVNLLNRITNTVLREYYEPQHWKLQQ</sequence>